<evidence type="ECO:0000255" key="1">
    <source>
        <dbReference type="HAMAP-Rule" id="MF_00435"/>
    </source>
</evidence>
<evidence type="ECO:0000255" key="2">
    <source>
        <dbReference type="PROSITE-ProRule" id="PRU01197"/>
    </source>
</evidence>
<evidence type="ECO:0000255" key="3">
    <source>
        <dbReference type="PROSITE-ProRule" id="PRU01198"/>
    </source>
</evidence>
<organism>
    <name type="scientific">Caldicellulosiruptor bescii (strain ATCC BAA-1888 / DSM 6725 / KCTC 15123 / Z-1320)</name>
    <name type="common">Anaerocellum thermophilum</name>
    <dbReference type="NCBI Taxonomy" id="521460"/>
    <lineage>
        <taxon>Bacteria</taxon>
        <taxon>Bacillati</taxon>
        <taxon>Bacillota</taxon>
        <taxon>Bacillota incertae sedis</taxon>
        <taxon>Caldicellulosiruptorales</taxon>
        <taxon>Caldicellulosiruptoraceae</taxon>
        <taxon>Caldicellulosiruptor</taxon>
    </lineage>
</organism>
<gene>
    <name evidence="1" type="primary">ilvC</name>
    <name type="ordered locus">Athe_0504</name>
</gene>
<reference key="1">
    <citation type="submission" date="2009-01" db="EMBL/GenBank/DDBJ databases">
        <title>Complete sequence of chromosome of Caldicellulosiruptor becscii DSM 6725.</title>
        <authorList>
            <person name="Lucas S."/>
            <person name="Copeland A."/>
            <person name="Lapidus A."/>
            <person name="Glavina del Rio T."/>
            <person name="Tice H."/>
            <person name="Bruce D."/>
            <person name="Goodwin L."/>
            <person name="Pitluck S."/>
            <person name="Sims D."/>
            <person name="Meincke L."/>
            <person name="Brettin T."/>
            <person name="Detter J.C."/>
            <person name="Han C."/>
            <person name="Larimer F."/>
            <person name="Land M."/>
            <person name="Hauser L."/>
            <person name="Kyrpides N."/>
            <person name="Ovchinnikova G."/>
            <person name="Kataeva I."/>
            <person name="Adams M.W.W."/>
        </authorList>
    </citation>
    <scope>NUCLEOTIDE SEQUENCE [LARGE SCALE GENOMIC DNA]</scope>
    <source>
        <strain>ATCC BAA-1888 / DSM 6725 / KCTC 15123 / Z-1320</strain>
    </source>
</reference>
<accession>B9MNV1</accession>
<comment type="function">
    <text evidence="1">Involved in the biosynthesis of branched-chain amino acids (BCAA). Catalyzes an alkyl-migration followed by a ketol-acid reduction of (S)-2-acetolactate (S2AL) to yield (R)-2,3-dihydroxy-isovalerate. In the isomerase reaction, S2AL is rearranged via a Mg-dependent methyl migration to produce 3-hydroxy-3-methyl-2-ketobutyrate (HMKB). In the reductase reaction, this 2-ketoacid undergoes a metal-dependent reduction by NADPH to yield (R)-2,3-dihydroxy-isovalerate.</text>
</comment>
<comment type="catalytic activity">
    <reaction evidence="1">
        <text>(2R)-2,3-dihydroxy-3-methylbutanoate + NADP(+) = (2S)-2-acetolactate + NADPH + H(+)</text>
        <dbReference type="Rhea" id="RHEA:22068"/>
        <dbReference type="ChEBI" id="CHEBI:15378"/>
        <dbReference type="ChEBI" id="CHEBI:49072"/>
        <dbReference type="ChEBI" id="CHEBI:57783"/>
        <dbReference type="ChEBI" id="CHEBI:58349"/>
        <dbReference type="ChEBI" id="CHEBI:58476"/>
        <dbReference type="EC" id="1.1.1.86"/>
    </reaction>
</comment>
<comment type="catalytic activity">
    <reaction evidence="1">
        <text>(2R,3R)-2,3-dihydroxy-3-methylpentanoate + NADP(+) = (S)-2-ethyl-2-hydroxy-3-oxobutanoate + NADPH + H(+)</text>
        <dbReference type="Rhea" id="RHEA:13493"/>
        <dbReference type="ChEBI" id="CHEBI:15378"/>
        <dbReference type="ChEBI" id="CHEBI:49256"/>
        <dbReference type="ChEBI" id="CHEBI:49258"/>
        <dbReference type="ChEBI" id="CHEBI:57783"/>
        <dbReference type="ChEBI" id="CHEBI:58349"/>
        <dbReference type="EC" id="1.1.1.86"/>
    </reaction>
</comment>
<comment type="cofactor">
    <cofactor evidence="1">
        <name>Mg(2+)</name>
        <dbReference type="ChEBI" id="CHEBI:18420"/>
    </cofactor>
    <text evidence="1">Binds 2 magnesium ions per subunit.</text>
</comment>
<comment type="pathway">
    <text evidence="1">Amino-acid biosynthesis; L-isoleucine biosynthesis; L-isoleucine from 2-oxobutanoate: step 2/4.</text>
</comment>
<comment type="pathway">
    <text evidence="1">Amino-acid biosynthesis; L-valine biosynthesis; L-valine from pyruvate: step 2/4.</text>
</comment>
<comment type="similarity">
    <text evidence="1">Belongs to the ketol-acid reductoisomerase family.</text>
</comment>
<dbReference type="EC" id="1.1.1.86" evidence="1"/>
<dbReference type="EMBL" id="CP001393">
    <property type="protein sequence ID" value="ACM59630.1"/>
    <property type="molecule type" value="Genomic_DNA"/>
</dbReference>
<dbReference type="RefSeq" id="WP_013431057.1">
    <property type="nucleotide sequence ID" value="NC_012034.1"/>
</dbReference>
<dbReference type="SMR" id="B9MNV1"/>
<dbReference type="STRING" id="521460.Athe_0504"/>
<dbReference type="GeneID" id="31771861"/>
<dbReference type="KEGG" id="ate:Athe_0504"/>
<dbReference type="eggNOG" id="COG0059">
    <property type="taxonomic scope" value="Bacteria"/>
</dbReference>
<dbReference type="HOGENOM" id="CLU_033821_0_1_9"/>
<dbReference type="UniPathway" id="UPA00047">
    <property type="reaction ID" value="UER00056"/>
</dbReference>
<dbReference type="UniPathway" id="UPA00049">
    <property type="reaction ID" value="UER00060"/>
</dbReference>
<dbReference type="Proteomes" id="UP000007723">
    <property type="component" value="Chromosome"/>
</dbReference>
<dbReference type="GO" id="GO:0005829">
    <property type="term" value="C:cytosol"/>
    <property type="evidence" value="ECO:0007669"/>
    <property type="project" value="TreeGrafter"/>
</dbReference>
<dbReference type="GO" id="GO:0004455">
    <property type="term" value="F:ketol-acid reductoisomerase activity"/>
    <property type="evidence" value="ECO:0007669"/>
    <property type="project" value="UniProtKB-UniRule"/>
</dbReference>
<dbReference type="GO" id="GO:0000287">
    <property type="term" value="F:magnesium ion binding"/>
    <property type="evidence" value="ECO:0007669"/>
    <property type="project" value="UniProtKB-UniRule"/>
</dbReference>
<dbReference type="GO" id="GO:0050661">
    <property type="term" value="F:NADP binding"/>
    <property type="evidence" value="ECO:0007669"/>
    <property type="project" value="InterPro"/>
</dbReference>
<dbReference type="GO" id="GO:0009097">
    <property type="term" value="P:isoleucine biosynthetic process"/>
    <property type="evidence" value="ECO:0007669"/>
    <property type="project" value="UniProtKB-UniRule"/>
</dbReference>
<dbReference type="GO" id="GO:0009099">
    <property type="term" value="P:L-valine biosynthetic process"/>
    <property type="evidence" value="ECO:0007669"/>
    <property type="project" value="UniProtKB-UniRule"/>
</dbReference>
<dbReference type="FunFam" id="3.40.50.720:FF:000023">
    <property type="entry name" value="Ketol-acid reductoisomerase (NADP(+))"/>
    <property type="match status" value="1"/>
</dbReference>
<dbReference type="Gene3D" id="6.10.240.10">
    <property type="match status" value="1"/>
</dbReference>
<dbReference type="Gene3D" id="3.40.50.720">
    <property type="entry name" value="NAD(P)-binding Rossmann-like Domain"/>
    <property type="match status" value="1"/>
</dbReference>
<dbReference type="HAMAP" id="MF_00435">
    <property type="entry name" value="IlvC"/>
    <property type="match status" value="1"/>
</dbReference>
<dbReference type="InterPro" id="IPR008927">
    <property type="entry name" value="6-PGluconate_DH-like_C_sf"/>
</dbReference>
<dbReference type="InterPro" id="IPR013023">
    <property type="entry name" value="KARI"/>
</dbReference>
<dbReference type="InterPro" id="IPR000506">
    <property type="entry name" value="KARI_C"/>
</dbReference>
<dbReference type="InterPro" id="IPR013116">
    <property type="entry name" value="KARI_N"/>
</dbReference>
<dbReference type="InterPro" id="IPR014359">
    <property type="entry name" value="KARI_prok"/>
</dbReference>
<dbReference type="InterPro" id="IPR036291">
    <property type="entry name" value="NAD(P)-bd_dom_sf"/>
</dbReference>
<dbReference type="NCBIfam" id="TIGR00465">
    <property type="entry name" value="ilvC"/>
    <property type="match status" value="1"/>
</dbReference>
<dbReference type="NCBIfam" id="NF004017">
    <property type="entry name" value="PRK05479.1"/>
    <property type="match status" value="1"/>
</dbReference>
<dbReference type="NCBIfam" id="NF009940">
    <property type="entry name" value="PRK13403.1"/>
    <property type="match status" value="1"/>
</dbReference>
<dbReference type="PANTHER" id="PTHR21371">
    <property type="entry name" value="KETOL-ACID REDUCTOISOMERASE, MITOCHONDRIAL"/>
    <property type="match status" value="1"/>
</dbReference>
<dbReference type="PANTHER" id="PTHR21371:SF1">
    <property type="entry name" value="KETOL-ACID REDUCTOISOMERASE, MITOCHONDRIAL"/>
    <property type="match status" value="1"/>
</dbReference>
<dbReference type="Pfam" id="PF01450">
    <property type="entry name" value="KARI_C"/>
    <property type="match status" value="1"/>
</dbReference>
<dbReference type="Pfam" id="PF07991">
    <property type="entry name" value="KARI_N"/>
    <property type="match status" value="1"/>
</dbReference>
<dbReference type="PIRSF" id="PIRSF000116">
    <property type="entry name" value="IlvC_gammaproteo"/>
    <property type="match status" value="1"/>
</dbReference>
<dbReference type="SUPFAM" id="SSF48179">
    <property type="entry name" value="6-phosphogluconate dehydrogenase C-terminal domain-like"/>
    <property type="match status" value="1"/>
</dbReference>
<dbReference type="SUPFAM" id="SSF51735">
    <property type="entry name" value="NAD(P)-binding Rossmann-fold domains"/>
    <property type="match status" value="1"/>
</dbReference>
<dbReference type="PROSITE" id="PS51851">
    <property type="entry name" value="KARI_C"/>
    <property type="match status" value="1"/>
</dbReference>
<dbReference type="PROSITE" id="PS51850">
    <property type="entry name" value="KARI_N"/>
    <property type="match status" value="1"/>
</dbReference>
<sequence length="333" mass="36989">MAKIFYDSDCNLDLLKDKTVAVIGFGSQGHAHALNLRDSGINVVVGLYHGSKSWAKAESHGLKVMTADEATKVADVIMILVNDEKQPKLFKESIEPNLKEGKAIAFAHGFNIHFGQIVPPPYVDVIMIAPKGPGHTVRSQYEEGKGVPALVAVHQDYTGKALDVALAYAKGIGASRAGIILTTFKEETETDLFGEQAVLCGGLTELIKAGFDTLVEAGYQPEIAYFECLHEMKLIVDLIWQGGLSLMRYSISDTAEYGDYMTGKRIITEETRKEMKKVLEEIQNGTFAKKWILENMAGRPEFNSIRKREQNLLIEQVGKELRKMMPWIKPIKE</sequence>
<proteinExistence type="inferred from homology"/>
<feature type="chain" id="PRO_1000190904" description="Ketol-acid reductoisomerase (NADP(+))">
    <location>
        <begin position="1"/>
        <end position="333"/>
    </location>
</feature>
<feature type="domain" description="KARI N-terminal Rossmann" evidence="2">
    <location>
        <begin position="2"/>
        <end position="182"/>
    </location>
</feature>
<feature type="domain" description="KARI C-terminal knotted" evidence="3">
    <location>
        <begin position="183"/>
        <end position="328"/>
    </location>
</feature>
<feature type="active site" evidence="1">
    <location>
        <position position="108"/>
    </location>
</feature>
<feature type="binding site" evidence="1">
    <location>
        <begin position="25"/>
        <end position="28"/>
    </location>
    <ligand>
        <name>NADP(+)</name>
        <dbReference type="ChEBI" id="CHEBI:58349"/>
    </ligand>
</feature>
<feature type="binding site" evidence="1">
    <location>
        <position position="51"/>
    </location>
    <ligand>
        <name>NADP(+)</name>
        <dbReference type="ChEBI" id="CHEBI:58349"/>
    </ligand>
</feature>
<feature type="binding site" evidence="1">
    <location>
        <position position="53"/>
    </location>
    <ligand>
        <name>NADP(+)</name>
        <dbReference type="ChEBI" id="CHEBI:58349"/>
    </ligand>
</feature>
<feature type="binding site" evidence="1">
    <location>
        <begin position="83"/>
        <end position="86"/>
    </location>
    <ligand>
        <name>NADP(+)</name>
        <dbReference type="ChEBI" id="CHEBI:58349"/>
    </ligand>
</feature>
<feature type="binding site" evidence="1">
    <location>
        <position position="134"/>
    </location>
    <ligand>
        <name>NADP(+)</name>
        <dbReference type="ChEBI" id="CHEBI:58349"/>
    </ligand>
</feature>
<feature type="binding site" evidence="1">
    <location>
        <position position="191"/>
    </location>
    <ligand>
        <name>Mg(2+)</name>
        <dbReference type="ChEBI" id="CHEBI:18420"/>
        <label>1</label>
    </ligand>
</feature>
<feature type="binding site" evidence="1">
    <location>
        <position position="191"/>
    </location>
    <ligand>
        <name>Mg(2+)</name>
        <dbReference type="ChEBI" id="CHEBI:18420"/>
        <label>2</label>
    </ligand>
</feature>
<feature type="binding site" evidence="1">
    <location>
        <position position="195"/>
    </location>
    <ligand>
        <name>Mg(2+)</name>
        <dbReference type="ChEBI" id="CHEBI:18420"/>
        <label>1</label>
    </ligand>
</feature>
<feature type="binding site" evidence="1">
    <location>
        <position position="227"/>
    </location>
    <ligand>
        <name>Mg(2+)</name>
        <dbReference type="ChEBI" id="CHEBI:18420"/>
        <label>2</label>
    </ligand>
</feature>
<feature type="binding site" evidence="1">
    <location>
        <position position="231"/>
    </location>
    <ligand>
        <name>Mg(2+)</name>
        <dbReference type="ChEBI" id="CHEBI:18420"/>
        <label>2</label>
    </ligand>
</feature>
<feature type="binding site" evidence="1">
    <location>
        <position position="252"/>
    </location>
    <ligand>
        <name>substrate</name>
    </ligand>
</feature>
<protein>
    <recommendedName>
        <fullName evidence="1">Ketol-acid reductoisomerase (NADP(+))</fullName>
        <shortName evidence="1">KARI</shortName>
        <ecNumber evidence="1">1.1.1.86</ecNumber>
    </recommendedName>
    <alternativeName>
        <fullName evidence="1">Acetohydroxy-acid isomeroreductase</fullName>
        <shortName evidence="1">AHIR</shortName>
    </alternativeName>
    <alternativeName>
        <fullName evidence="1">Alpha-keto-beta-hydroxylacyl reductoisomerase</fullName>
    </alternativeName>
    <alternativeName>
        <fullName evidence="1">Ketol-acid reductoisomerase type 1</fullName>
    </alternativeName>
    <alternativeName>
        <fullName evidence="1">Ketol-acid reductoisomerase type I</fullName>
    </alternativeName>
</protein>
<name>ILVC_CALBD</name>
<keyword id="KW-0028">Amino-acid biosynthesis</keyword>
<keyword id="KW-0100">Branched-chain amino acid biosynthesis</keyword>
<keyword id="KW-0460">Magnesium</keyword>
<keyword id="KW-0479">Metal-binding</keyword>
<keyword id="KW-0521">NADP</keyword>
<keyword id="KW-0560">Oxidoreductase</keyword>